<gene>
    <name type="primary">ptr-1</name>
    <name type="synonym">akr1</name>
    <name type="ORF">NCU08218</name>
</gene>
<sequence length="729" mass="80085">MVHHDGADAHAGHAAPAQPPMKSDTATPKLNSEVELGSLPSEAHNDIMQMARVGDITGMEKLFAAGEYDATYSDDEGITPLHWAAINNQYAMCKFLIDKGAEINKKGGESVATPLQWAAQRCHYYTVHLLLQHGADPLITDSQGYNTLHISTFNGNVLLIVLLLHQGIPVDVEDAYGHTALMWSAYKGFPACVDVFLRWGASVHAKDEQGFTALHWALVKGSPGCIQKLIEYGADRFAKTANGKTPAITAQELNTVAAWQKALDECGYDEHGNAIVPSWPGASYLLQDRRSFMTKFTFLWPFVMVWATMVVMAGMPVFVGIPLGVLAGYAVQWVAQQVIAYAPPDMRQLQKTPWMAGIFAGSLFLCIMNWLLHIFGSTMFGQDSAVIPNLLFAFFISMTIWFYIRCMVDDPGFVPKMGGVAEQKAVIDELISLWKFDESNFCVTCMIRTPLRSKHCRRCQRCVAKHDHHCPWVYNCIGVNNHRHFFFYLINLTLSVVTYDWLTYRYLSTLSETASDECNILAPSLCRIVNADTYSLLTAIWASLQLTWVSMLLFVQFVQVSSAMTTYENMHGIDNYSATSLNSSFTSTGAPLNPPSLPAPGPSPAAGGARHGGRHAHGHNHKQGFIKQWSRLLGVDAFIETAAGRGATTGKGSKRNKRGNPYSRGCVTNCKDFWCDPSPMFGKHENGAAVLGGVPVNYTDMYESPGVMTSGGGGRRRGGGYESVAGEEV</sequence>
<evidence type="ECO:0000250" key="1"/>
<evidence type="ECO:0000255" key="2"/>
<evidence type="ECO:0000255" key="3">
    <source>
        <dbReference type="PROSITE-ProRule" id="PRU00067"/>
    </source>
</evidence>
<evidence type="ECO:0000256" key="4">
    <source>
        <dbReference type="SAM" id="MobiDB-lite"/>
    </source>
</evidence>
<evidence type="ECO:0000305" key="5"/>
<proteinExistence type="inferred from homology"/>
<name>AKR1_NEUCR</name>
<comment type="function">
    <text evidence="1">Palmitoyltransferase specific for casein kinase 1.</text>
</comment>
<comment type="catalytic activity">
    <reaction>
        <text>L-cysteinyl-[protein] + hexadecanoyl-CoA = S-hexadecanoyl-L-cysteinyl-[protein] + CoA</text>
        <dbReference type="Rhea" id="RHEA:36683"/>
        <dbReference type="Rhea" id="RHEA-COMP:10131"/>
        <dbReference type="Rhea" id="RHEA-COMP:11032"/>
        <dbReference type="ChEBI" id="CHEBI:29950"/>
        <dbReference type="ChEBI" id="CHEBI:57287"/>
        <dbReference type="ChEBI" id="CHEBI:57379"/>
        <dbReference type="ChEBI" id="CHEBI:74151"/>
        <dbReference type="EC" id="2.3.1.225"/>
    </reaction>
</comment>
<comment type="subcellular location">
    <subcellularLocation>
        <location>Early endosome membrane</location>
        <topology>Multi-pass membrane protein</topology>
    </subcellularLocation>
    <subcellularLocation>
        <location evidence="1">Golgi apparatus membrane</location>
        <topology evidence="1">Multi-pass membrane protein</topology>
    </subcellularLocation>
</comment>
<comment type="domain">
    <text evidence="1">The DHHC domain is required for palmitoyltransferase activity.</text>
</comment>
<comment type="similarity">
    <text evidence="5">Belongs to the DHHC palmitoyltransferase family. AKR/ZDHHC17 subfamily.</text>
</comment>
<dbReference type="EC" id="2.3.1.225"/>
<dbReference type="EMBL" id="CM002238">
    <property type="protein sequence ID" value="EAA30072.3"/>
    <property type="molecule type" value="Genomic_DNA"/>
</dbReference>
<dbReference type="RefSeq" id="XP_959308.3">
    <property type="nucleotide sequence ID" value="XM_954215.3"/>
</dbReference>
<dbReference type="SMR" id="Q7S3M5"/>
<dbReference type="FunCoup" id="Q7S3M5">
    <property type="interactions" value="590"/>
</dbReference>
<dbReference type="STRING" id="367110.Q7S3M5"/>
<dbReference type="PaxDb" id="5141-EFNCRP00000004752"/>
<dbReference type="EnsemblFungi" id="EAA30072">
    <property type="protein sequence ID" value="EAA30072"/>
    <property type="gene ID" value="NCU08218"/>
</dbReference>
<dbReference type="GeneID" id="3875430"/>
<dbReference type="KEGG" id="ncr:NCU08218"/>
<dbReference type="VEuPathDB" id="FungiDB:NCU08218"/>
<dbReference type="HOGENOM" id="CLU_012510_1_0_1"/>
<dbReference type="InParanoid" id="Q7S3M5"/>
<dbReference type="OrthoDB" id="6781668at2759"/>
<dbReference type="Proteomes" id="UP000001805">
    <property type="component" value="Chromosome 3, Linkage Group III"/>
</dbReference>
<dbReference type="GO" id="GO:0031901">
    <property type="term" value="C:early endosome membrane"/>
    <property type="evidence" value="ECO:0007669"/>
    <property type="project" value="UniProtKB-SubCell"/>
</dbReference>
<dbReference type="GO" id="GO:0000139">
    <property type="term" value="C:Golgi membrane"/>
    <property type="evidence" value="ECO:0007669"/>
    <property type="project" value="UniProtKB-SubCell"/>
</dbReference>
<dbReference type="GO" id="GO:0019706">
    <property type="term" value="F:protein-cysteine S-palmitoyltransferase activity"/>
    <property type="evidence" value="ECO:0007669"/>
    <property type="project" value="UniProtKB-EC"/>
</dbReference>
<dbReference type="Gene3D" id="1.25.40.20">
    <property type="entry name" value="Ankyrin repeat-containing domain"/>
    <property type="match status" value="1"/>
</dbReference>
<dbReference type="InterPro" id="IPR002110">
    <property type="entry name" value="Ankyrin_rpt"/>
</dbReference>
<dbReference type="InterPro" id="IPR036770">
    <property type="entry name" value="Ankyrin_rpt-contain_sf"/>
</dbReference>
<dbReference type="InterPro" id="IPR001594">
    <property type="entry name" value="Palmitoyltrfase_DHHC"/>
</dbReference>
<dbReference type="PANTHER" id="PTHR24161">
    <property type="entry name" value="ANK_REP_REGION DOMAIN-CONTAINING PROTEIN-RELATED"/>
    <property type="match status" value="1"/>
</dbReference>
<dbReference type="PANTHER" id="PTHR24161:SF85">
    <property type="entry name" value="PALMITOYLTRANSFERASE HIP14"/>
    <property type="match status" value="1"/>
</dbReference>
<dbReference type="Pfam" id="PF00023">
    <property type="entry name" value="Ank"/>
    <property type="match status" value="2"/>
</dbReference>
<dbReference type="Pfam" id="PF12796">
    <property type="entry name" value="Ank_2"/>
    <property type="match status" value="1"/>
</dbReference>
<dbReference type="Pfam" id="PF01529">
    <property type="entry name" value="DHHC"/>
    <property type="match status" value="1"/>
</dbReference>
<dbReference type="SMART" id="SM00248">
    <property type="entry name" value="ANK"/>
    <property type="match status" value="5"/>
</dbReference>
<dbReference type="SUPFAM" id="SSF48403">
    <property type="entry name" value="Ankyrin repeat"/>
    <property type="match status" value="1"/>
</dbReference>
<dbReference type="PROSITE" id="PS50297">
    <property type="entry name" value="ANK_REP_REGION"/>
    <property type="match status" value="1"/>
</dbReference>
<dbReference type="PROSITE" id="PS50088">
    <property type="entry name" value="ANK_REPEAT"/>
    <property type="match status" value="5"/>
</dbReference>
<dbReference type="PROSITE" id="PS50216">
    <property type="entry name" value="DHHC"/>
    <property type="match status" value="1"/>
</dbReference>
<protein>
    <recommendedName>
        <fullName>Palmitoyltransferase akr1</fullName>
        <ecNumber>2.3.1.225</ecNumber>
    </recommendedName>
    <alternativeName>
        <fullName>Ankyrin repeat-containing protein akr1</fullName>
    </alternativeName>
    <alternativeName>
        <fullName>Palmitoyltransferase 1</fullName>
    </alternativeName>
</protein>
<accession>Q7S3M5</accession>
<feature type="chain" id="PRO_0000212927" description="Palmitoyltransferase akr1">
    <location>
        <begin position="1"/>
        <end position="729"/>
    </location>
</feature>
<feature type="topological domain" description="Cytoplasmic" evidence="2">
    <location>
        <begin position="1"/>
        <end position="297"/>
    </location>
</feature>
<feature type="transmembrane region" description="Helical" evidence="2">
    <location>
        <begin position="298"/>
        <end position="318"/>
    </location>
</feature>
<feature type="transmembrane region" description="Helical" evidence="2">
    <location>
        <begin position="319"/>
        <end position="339"/>
    </location>
</feature>
<feature type="topological domain" description="Cytoplasmic" evidence="2">
    <location>
        <begin position="340"/>
        <end position="354"/>
    </location>
</feature>
<feature type="transmembrane region" description="Helical" evidence="2">
    <location>
        <begin position="355"/>
        <end position="375"/>
    </location>
</feature>
<feature type="topological domain" description="Lumenal" evidence="2">
    <location>
        <begin position="376"/>
        <end position="383"/>
    </location>
</feature>
<feature type="transmembrane region" description="Helical" evidence="2">
    <location>
        <begin position="384"/>
        <end position="404"/>
    </location>
</feature>
<feature type="topological domain" description="Cytoplasmic" evidence="2">
    <location>
        <begin position="405"/>
        <end position="483"/>
    </location>
</feature>
<feature type="transmembrane region" description="Helical" evidence="2">
    <location>
        <begin position="484"/>
        <end position="504"/>
    </location>
</feature>
<feature type="topological domain" description="Lumenal" evidence="2">
    <location>
        <begin position="505"/>
        <end position="534"/>
    </location>
</feature>
<feature type="transmembrane region" description="Helical" evidence="2">
    <location>
        <begin position="535"/>
        <end position="555"/>
    </location>
</feature>
<feature type="topological domain" description="Cytoplasmic" evidence="2">
    <location>
        <begin position="556"/>
        <end position="729"/>
    </location>
</feature>
<feature type="repeat" description="ANK 1">
    <location>
        <begin position="76"/>
        <end position="105"/>
    </location>
</feature>
<feature type="repeat" description="ANK 2">
    <location>
        <begin position="110"/>
        <end position="139"/>
    </location>
</feature>
<feature type="repeat" description="ANK 3">
    <location>
        <begin position="143"/>
        <end position="172"/>
    </location>
</feature>
<feature type="repeat" description="ANK 4">
    <location>
        <begin position="176"/>
        <end position="205"/>
    </location>
</feature>
<feature type="repeat" description="ANK 5">
    <location>
        <begin position="209"/>
        <end position="238"/>
    </location>
</feature>
<feature type="domain" description="DHHC" evidence="3">
    <location>
        <begin position="440"/>
        <end position="490"/>
    </location>
</feature>
<feature type="region of interest" description="Disordered" evidence="4">
    <location>
        <begin position="1"/>
        <end position="28"/>
    </location>
</feature>
<feature type="region of interest" description="Disordered" evidence="4">
    <location>
        <begin position="587"/>
        <end position="620"/>
    </location>
</feature>
<feature type="region of interest" description="Disordered" evidence="4">
    <location>
        <begin position="709"/>
        <end position="729"/>
    </location>
</feature>
<feature type="compositionally biased region" description="Basic and acidic residues" evidence="4">
    <location>
        <begin position="1"/>
        <end position="11"/>
    </location>
</feature>
<feature type="compositionally biased region" description="Pro residues" evidence="4">
    <location>
        <begin position="592"/>
        <end position="603"/>
    </location>
</feature>
<feature type="compositionally biased region" description="Basic residues" evidence="4">
    <location>
        <begin position="611"/>
        <end position="620"/>
    </location>
</feature>
<feature type="active site" description="S-palmitoyl cysteine intermediate" evidence="1">
    <location>
        <position position="470"/>
    </location>
</feature>
<organism>
    <name type="scientific">Neurospora crassa (strain ATCC 24698 / 74-OR23-1A / CBS 708.71 / DSM 1257 / FGSC 987)</name>
    <dbReference type="NCBI Taxonomy" id="367110"/>
    <lineage>
        <taxon>Eukaryota</taxon>
        <taxon>Fungi</taxon>
        <taxon>Dikarya</taxon>
        <taxon>Ascomycota</taxon>
        <taxon>Pezizomycotina</taxon>
        <taxon>Sordariomycetes</taxon>
        <taxon>Sordariomycetidae</taxon>
        <taxon>Sordariales</taxon>
        <taxon>Sordariaceae</taxon>
        <taxon>Neurospora</taxon>
    </lineage>
</organism>
<keyword id="KW-0012">Acyltransferase</keyword>
<keyword id="KW-0040">ANK repeat</keyword>
<keyword id="KW-0967">Endosome</keyword>
<keyword id="KW-0333">Golgi apparatus</keyword>
<keyword id="KW-0449">Lipoprotein</keyword>
<keyword id="KW-0472">Membrane</keyword>
<keyword id="KW-0564">Palmitate</keyword>
<keyword id="KW-1185">Reference proteome</keyword>
<keyword id="KW-0677">Repeat</keyword>
<keyword id="KW-0808">Transferase</keyword>
<keyword id="KW-0812">Transmembrane</keyword>
<keyword id="KW-1133">Transmembrane helix</keyword>
<reference key="1">
    <citation type="journal article" date="2003" name="Nature">
        <title>The genome sequence of the filamentous fungus Neurospora crassa.</title>
        <authorList>
            <person name="Galagan J.E."/>
            <person name="Calvo S.E."/>
            <person name="Borkovich K.A."/>
            <person name="Selker E.U."/>
            <person name="Read N.D."/>
            <person name="Jaffe D.B."/>
            <person name="FitzHugh W."/>
            <person name="Ma L.-J."/>
            <person name="Smirnov S."/>
            <person name="Purcell S."/>
            <person name="Rehman B."/>
            <person name="Elkins T."/>
            <person name="Engels R."/>
            <person name="Wang S."/>
            <person name="Nielsen C.B."/>
            <person name="Butler J."/>
            <person name="Endrizzi M."/>
            <person name="Qui D."/>
            <person name="Ianakiev P."/>
            <person name="Bell-Pedersen D."/>
            <person name="Nelson M.A."/>
            <person name="Werner-Washburne M."/>
            <person name="Selitrennikoff C.P."/>
            <person name="Kinsey J.A."/>
            <person name="Braun E.L."/>
            <person name="Zelter A."/>
            <person name="Schulte U."/>
            <person name="Kothe G.O."/>
            <person name="Jedd G."/>
            <person name="Mewes H.-W."/>
            <person name="Staben C."/>
            <person name="Marcotte E."/>
            <person name="Greenberg D."/>
            <person name="Roy A."/>
            <person name="Foley K."/>
            <person name="Naylor J."/>
            <person name="Stange-Thomann N."/>
            <person name="Barrett R."/>
            <person name="Gnerre S."/>
            <person name="Kamal M."/>
            <person name="Kamvysselis M."/>
            <person name="Mauceli E.W."/>
            <person name="Bielke C."/>
            <person name="Rudd S."/>
            <person name="Frishman D."/>
            <person name="Krystofova S."/>
            <person name="Rasmussen C."/>
            <person name="Metzenberg R.L."/>
            <person name="Perkins D.D."/>
            <person name="Kroken S."/>
            <person name="Cogoni C."/>
            <person name="Macino G."/>
            <person name="Catcheside D.E.A."/>
            <person name="Li W."/>
            <person name="Pratt R.J."/>
            <person name="Osmani S.A."/>
            <person name="DeSouza C.P.C."/>
            <person name="Glass N.L."/>
            <person name="Orbach M.J."/>
            <person name="Berglund J.A."/>
            <person name="Voelker R."/>
            <person name="Yarden O."/>
            <person name="Plamann M."/>
            <person name="Seiler S."/>
            <person name="Dunlap J.C."/>
            <person name="Radford A."/>
            <person name="Aramayo R."/>
            <person name="Natvig D.O."/>
            <person name="Alex L.A."/>
            <person name="Mannhaupt G."/>
            <person name="Ebbole D.J."/>
            <person name="Freitag M."/>
            <person name="Paulsen I."/>
            <person name="Sachs M.S."/>
            <person name="Lander E.S."/>
            <person name="Nusbaum C."/>
            <person name="Birren B.W."/>
        </authorList>
    </citation>
    <scope>NUCLEOTIDE SEQUENCE [LARGE SCALE GENOMIC DNA]</scope>
    <source>
        <strain>ATCC 24698 / 74-OR23-1A / CBS 708.71 / DSM 1257 / FGSC 987</strain>
    </source>
</reference>